<keyword id="KW-0002">3D-structure</keyword>
<keyword id="KW-0025">Alternative splicing</keyword>
<keyword id="KW-0095">Blood group antigen</keyword>
<keyword id="KW-1003">Cell membrane</keyword>
<keyword id="KW-0180">Complement pathway</keyword>
<keyword id="KW-0903">Direct protein sequencing</keyword>
<keyword id="KW-0225">Disease variant</keyword>
<keyword id="KW-1015">Disulfide bond</keyword>
<keyword id="KW-0325">Glycoprotein</keyword>
<keyword id="KW-0336">GPI-anchor</keyword>
<keyword id="KW-1183">Host cell receptor for virus entry</keyword>
<keyword id="KW-0945">Host-virus interaction</keyword>
<keyword id="KW-0391">Immunity</keyword>
<keyword id="KW-0399">Innate immunity</keyword>
<keyword id="KW-0449">Lipoprotein</keyword>
<keyword id="KW-0472">Membrane</keyword>
<keyword id="KW-1267">Proteomics identification</keyword>
<keyword id="KW-0675">Receptor</keyword>
<keyword id="KW-1185">Reference proteome</keyword>
<keyword id="KW-0677">Repeat</keyword>
<keyword id="KW-0964">Secreted</keyword>
<keyword id="KW-0732">Signal</keyword>
<keyword id="KW-0768">Sushi</keyword>
<evidence type="ECO:0000250" key="1"/>
<evidence type="ECO:0000255" key="2">
    <source>
        <dbReference type="PROSITE-ProRule" id="PRU00302"/>
    </source>
</evidence>
<evidence type="ECO:0000256" key="3">
    <source>
        <dbReference type="SAM" id="MobiDB-lite"/>
    </source>
</evidence>
<evidence type="ECO:0000269" key="4">
    <source>
    </source>
</evidence>
<evidence type="ECO:0000269" key="5">
    <source>
    </source>
</evidence>
<evidence type="ECO:0000269" key="6">
    <source>
    </source>
</evidence>
<evidence type="ECO:0000269" key="7">
    <source>
    </source>
</evidence>
<evidence type="ECO:0000269" key="8">
    <source>
    </source>
</evidence>
<evidence type="ECO:0000269" key="9">
    <source>
    </source>
</evidence>
<evidence type="ECO:0000269" key="10">
    <source>
    </source>
</evidence>
<evidence type="ECO:0000269" key="11">
    <source>
    </source>
</evidence>
<evidence type="ECO:0000269" key="12">
    <source>
    </source>
</evidence>
<evidence type="ECO:0000269" key="13">
    <source>
    </source>
</evidence>
<evidence type="ECO:0000269" key="14">
    <source>
    </source>
</evidence>
<evidence type="ECO:0000269" key="15">
    <source>
    </source>
</evidence>
<evidence type="ECO:0000269" key="16">
    <source>
    </source>
</evidence>
<evidence type="ECO:0000269" key="17">
    <source>
    </source>
</evidence>
<evidence type="ECO:0000269" key="18">
    <source>
    </source>
</evidence>
<evidence type="ECO:0000269" key="19">
    <source ref="4"/>
</evidence>
<evidence type="ECO:0000303" key="20">
    <source>
    </source>
</evidence>
<evidence type="ECO:0000303" key="21">
    <source>
    </source>
</evidence>
<evidence type="ECO:0000303" key="22">
    <source>
    </source>
</evidence>
<evidence type="ECO:0000305" key="23"/>
<evidence type="ECO:0000305" key="24">
    <source>
    </source>
</evidence>
<evidence type="ECO:0000305" key="25">
    <source>
    </source>
</evidence>
<evidence type="ECO:0000305" key="26">
    <source>
    </source>
</evidence>
<evidence type="ECO:0007829" key="27">
    <source>
        <dbReference type="PDB" id="1H03"/>
    </source>
</evidence>
<evidence type="ECO:0007829" key="28">
    <source>
        <dbReference type="PDB" id="1H2P"/>
    </source>
</evidence>
<evidence type="ECO:0007829" key="29">
    <source>
        <dbReference type="PDB" id="1OJW"/>
    </source>
</evidence>
<evidence type="ECO:0007829" key="30">
    <source>
        <dbReference type="PDB" id="1OK3"/>
    </source>
</evidence>
<evidence type="ECO:0007829" key="31">
    <source>
        <dbReference type="PDB" id="1OK9"/>
    </source>
</evidence>
<evidence type="ECO:0007829" key="32">
    <source>
        <dbReference type="PDB" id="1UOT"/>
    </source>
</evidence>
<evidence type="ECO:0007829" key="33">
    <source>
        <dbReference type="PDB" id="7VY6"/>
    </source>
</evidence>
<feature type="signal peptide" evidence="8 11">
    <location>
        <begin position="1"/>
        <end position="34"/>
    </location>
</feature>
<feature type="chain" id="PRO_0000006000" description="Complement decay-accelerating factor">
    <location>
        <begin position="35"/>
        <end position="353"/>
    </location>
</feature>
<feature type="propeptide" id="PRO_0000006001" description="Removed in mature form">
    <location>
        <begin position="354"/>
        <end position="381"/>
    </location>
</feature>
<feature type="domain" description="Sushi 1" evidence="2">
    <location>
        <begin position="35"/>
        <end position="96"/>
    </location>
</feature>
<feature type="domain" description="Sushi 2" evidence="2">
    <location>
        <begin position="96"/>
        <end position="160"/>
    </location>
</feature>
<feature type="domain" description="Sushi 3" evidence="2">
    <location>
        <begin position="161"/>
        <end position="222"/>
    </location>
</feature>
<feature type="domain" description="Sushi 4" evidence="2">
    <location>
        <begin position="223"/>
        <end position="285"/>
    </location>
</feature>
<feature type="region of interest" description="Disordered" evidence="3">
    <location>
        <begin position="277"/>
        <end position="354"/>
    </location>
</feature>
<feature type="compositionally biased region" description="Polar residues" evidence="3">
    <location>
        <begin position="287"/>
        <end position="309"/>
    </location>
</feature>
<feature type="compositionally biased region" description="Low complexity" evidence="3">
    <location>
        <begin position="310"/>
        <end position="328"/>
    </location>
</feature>
<feature type="lipid moiety-binding region" description="GPI-anchor amidated serine" evidence="9">
    <location>
        <position position="353"/>
    </location>
</feature>
<feature type="glycosylation site" description="N-linked (GlcNAc...) asparagine" evidence="10">
    <location>
        <position position="95"/>
    </location>
</feature>
<feature type="disulfide bond" evidence="2 6">
    <location>
        <begin position="36"/>
        <end position="81"/>
    </location>
</feature>
<feature type="disulfide bond" evidence="2 6">
    <location>
        <begin position="65"/>
        <end position="94"/>
    </location>
</feature>
<feature type="disulfide bond" evidence="2 6">
    <location>
        <begin position="98"/>
        <end position="145"/>
    </location>
</feature>
<feature type="disulfide bond" evidence="2 6">
    <location>
        <begin position="129"/>
        <end position="158"/>
    </location>
</feature>
<feature type="disulfide bond" evidence="2 6">
    <location>
        <begin position="163"/>
        <end position="204"/>
    </location>
</feature>
<feature type="disulfide bond" evidence="2 6">
    <location>
        <begin position="190"/>
        <end position="220"/>
    </location>
</feature>
<feature type="disulfide bond" evidence="2 6">
    <location>
        <begin position="225"/>
        <end position="267"/>
    </location>
</feature>
<feature type="disulfide bond" evidence="2 6">
    <location>
        <begin position="253"/>
        <end position="283"/>
    </location>
</feature>
<feature type="splice variant" id="VSP_047634" description="In isoform 7." evidence="21">
    <original>Q</original>
    <variation>QGTETPSVLQKHTTENVSATRTPPTPQKPTTVNVPATIVTPTPQKPTTINVPATGVSSTPQRHTIVNVSATGTLPTLQKPTRANDSATKSPAAAQTSFISKTLSTKTPSAAQNPMMTNASATQATLTAQKFTTAKVAFTQSPSAARKSTNVHSPVTNGLKSTQRFPSAHIT</variation>
    <location>
        <position position="326"/>
    </location>
</feature>
<feature type="splice variant" id="VSP_047635" description="In isoform 6." evidence="21">
    <original>A</original>
    <variation>GTETPSVLQKHTTENVSATRTPPTPQKPTTVNVPATIVTPTPQKPTTINVPATGVSSTPQRHTIVNVSATGTLPTLQKPTRANDSATKSPAAAQTSFISKTLSTKTPSAAQNPMMTNASATQATLTAQKFTTAKVAFTQSPSAAP</variation>
    <location>
        <position position="327"/>
    </location>
</feature>
<feature type="splice variant" id="VSP_047636" description="In isoform 3." evidence="21">
    <original>GHTCFTLTGLLGTLVTMGLLT</original>
    <variation>ALQVRPFEVSGSSHISSKKMMCIL</variation>
    <location>
        <begin position="361"/>
        <end position="381"/>
    </location>
</feature>
<feature type="splice variant" id="VSP_047637" description="In isoform 4." evidence="21">
    <original>GHTCFTLTGLLGTLVTMGLLT</original>
    <variation>VLFM</variation>
    <location>
        <begin position="361"/>
        <end position="381"/>
    </location>
</feature>
<feature type="splice variant" id="VSP_047638" description="In isoform 5." evidence="21">
    <original>GHTCFTLTGLLGTLVTMGLLT</original>
    <variation>ETVFHRVIQDGLDLLASRSACLGLPKCWDYRREPPHLARAHVFHVDRFAWDASNHGLADLAKEELRRKYTQVYRLFLVS</variation>
    <location>
        <begin position="361"/>
        <end position="381"/>
    </location>
</feature>
<feature type="splice variant" id="VSP_001200" description="In isoform 1." evidence="20 22">
    <original>HTCFTLTGLLGTLVTMGLLT</original>
    <variation>SRPVTQAGMRWCDRSSLQSRTPGFKRSFHFSLPSSWYYRAHVFHVDRFAWDASNHGLADLAKEELRRKYTQVYRLFLVS</variation>
    <location>
        <begin position="362"/>
        <end position="381"/>
    </location>
</feature>
<feature type="sequence variant" id="VAR_001997" description="In Tc(b) antigen; dbSNP:rs28371588." evidence="19">
    <original>R</original>
    <variation>L</variation>
    <location>
        <position position="52"/>
    </location>
</feature>
<feature type="sequence variant" id="VAR_001998" description="In Tc(c) antigen; dbSNP:rs28371588.">
    <original>R</original>
    <variation>P</variation>
    <location>
        <position position="52"/>
    </location>
</feature>
<feature type="sequence variant" id="VAR_001999" description="In WES(a) antigen; dbSNP:rs147474393.">
    <original>L</original>
    <variation>R</variation>
    <location>
        <position position="82"/>
    </location>
</feature>
<feature type="sequence variant" id="VAR_002000" description="In Dr(a-) antigen; dbSNP:rs1135402914." evidence="15">
    <original>S</original>
    <variation>L</variation>
    <location>
        <position position="199"/>
    </location>
</feature>
<feature type="sequence variant" id="VAR_002001" description="In Cr(a-) antigen; dbSNP:rs60822373.">
    <original>A</original>
    <variation>P</variation>
    <location>
        <position position="227"/>
    </location>
</feature>
<feature type="sequence variant" id="VAR_015884" description="In GUTI(-) antigen; dbSNP:rs199705465." evidence="5">
    <original>R</original>
    <variation>H</variation>
    <location>
        <position position="240"/>
    </location>
</feature>
<feature type="sequence variant" id="VAR_079373" description="In CHAPLE; increased complement activation; dbSNP:rs1135402917." evidence="13">
    <original>C</original>
    <variation>S</variation>
    <location>
        <position position="267"/>
    </location>
</feature>
<feature type="sequence conflict" description="In Ref. 8; AAA52170 and 9; AAA52167." evidence="23" ref="8 9">
    <original>I</original>
    <variation>T</variation>
    <location>
        <position position="80"/>
    </location>
</feature>
<feature type="sequence conflict" description="In Ref. 9; AAA52167." evidence="23" ref="9">
    <original>S</original>
    <variation>M</variation>
    <location>
        <position position="85"/>
    </location>
</feature>
<feature type="sequence conflict" description="In Ref. 10; AAB48622." evidence="23" ref="10">
    <original>S</original>
    <variation>T</variation>
    <location>
        <position position="187"/>
    </location>
</feature>
<feature type="sequence conflict" description="In Ref. 10; AAB48622." evidence="23" ref="10">
    <original>Q</original>
    <variation>H</variation>
    <location>
        <position position="297"/>
    </location>
</feature>
<feature type="strand" evidence="30">
    <location>
        <begin position="45"/>
        <end position="47"/>
    </location>
</feature>
<feature type="strand" evidence="30">
    <location>
        <begin position="60"/>
        <end position="65"/>
    </location>
</feature>
<feature type="strand" evidence="29">
    <location>
        <begin position="69"/>
        <end position="71"/>
    </location>
</feature>
<feature type="strand" evidence="30">
    <location>
        <begin position="78"/>
        <end position="82"/>
    </location>
</feature>
<feature type="turn" evidence="30">
    <location>
        <begin position="83"/>
        <end position="85"/>
    </location>
</feature>
<feature type="strand" evidence="29">
    <location>
        <begin position="94"/>
        <end position="98"/>
    </location>
</feature>
<feature type="strand" evidence="30">
    <location>
        <begin position="105"/>
        <end position="109"/>
    </location>
</feature>
<feature type="helix" evidence="30">
    <location>
        <begin position="113"/>
        <end position="115"/>
    </location>
</feature>
<feature type="strand" evidence="30">
    <location>
        <begin position="124"/>
        <end position="129"/>
    </location>
</feature>
<feature type="strand" evidence="30">
    <location>
        <begin position="133"/>
        <end position="135"/>
    </location>
</feature>
<feature type="strand" evidence="33">
    <location>
        <begin position="137"/>
        <end position="139"/>
    </location>
</feature>
<feature type="strand" evidence="30">
    <location>
        <begin position="142"/>
        <end position="145"/>
    </location>
</feature>
<feature type="strand" evidence="31">
    <location>
        <begin position="149"/>
        <end position="151"/>
    </location>
</feature>
<feature type="strand" evidence="30">
    <location>
        <begin position="157"/>
        <end position="160"/>
    </location>
</feature>
<feature type="strand" evidence="27">
    <location>
        <begin position="172"/>
        <end position="175"/>
    </location>
</feature>
<feature type="turn" evidence="32">
    <location>
        <begin position="177"/>
        <end position="180"/>
    </location>
</feature>
<feature type="strand" evidence="27">
    <location>
        <begin position="185"/>
        <end position="190"/>
    </location>
</feature>
<feature type="strand" evidence="27">
    <location>
        <begin position="194"/>
        <end position="198"/>
    </location>
</feature>
<feature type="strand" evidence="27">
    <location>
        <begin position="200"/>
        <end position="207"/>
    </location>
</feature>
<feature type="strand" evidence="27">
    <location>
        <begin position="210"/>
        <end position="215"/>
    </location>
</feature>
<feature type="strand" evidence="27">
    <location>
        <begin position="219"/>
        <end position="222"/>
    </location>
</feature>
<feature type="strand" evidence="27">
    <location>
        <begin position="234"/>
        <end position="236"/>
    </location>
</feature>
<feature type="strand" evidence="28">
    <location>
        <begin position="241"/>
        <end position="244"/>
    </location>
</feature>
<feature type="strand" evidence="27">
    <location>
        <begin position="248"/>
        <end position="253"/>
    </location>
</feature>
<feature type="strand" evidence="27">
    <location>
        <begin position="258"/>
        <end position="261"/>
    </location>
</feature>
<feature type="strand" evidence="27">
    <location>
        <begin position="263"/>
        <end position="270"/>
    </location>
</feature>
<feature type="strand" evidence="27">
    <location>
        <begin position="273"/>
        <end position="278"/>
    </location>
</feature>
<feature type="strand" evidence="27">
    <location>
        <begin position="282"/>
        <end position="284"/>
    </location>
</feature>
<accession>P08174</accession>
<accession>B1AP14</accession>
<accession>D3DT83</accession>
<accession>D3DT84</accession>
<accession>E7ER69</accession>
<accession>P09679</accession>
<accession>P78361</accession>
<accession>Q14UF2</accession>
<accession>Q14UF3</accession>
<accession>Q14UF4</accession>
<accession>Q14UF5</accession>
<accession>Q14UF6</accession>
<gene>
    <name type="primary">CD55</name>
    <name type="synonym">CR</name>
    <name type="synonym">DAF</name>
</gene>
<organism>
    <name type="scientific">Homo sapiens</name>
    <name type="common">Human</name>
    <dbReference type="NCBI Taxonomy" id="9606"/>
    <lineage>
        <taxon>Eukaryota</taxon>
        <taxon>Metazoa</taxon>
        <taxon>Chordata</taxon>
        <taxon>Craniata</taxon>
        <taxon>Vertebrata</taxon>
        <taxon>Euteleostomi</taxon>
        <taxon>Mammalia</taxon>
        <taxon>Eutheria</taxon>
        <taxon>Euarchontoglires</taxon>
        <taxon>Primates</taxon>
        <taxon>Haplorrhini</taxon>
        <taxon>Catarrhini</taxon>
        <taxon>Hominidae</taxon>
        <taxon>Homo</taxon>
    </lineage>
</organism>
<sequence length="381" mass="41400">MTVARPSVPAALPLLGELPRLLLLVLLCLPAVWGDCGLPPDVPNAQPALEGRTSFPEDTVITYKCEESFVKIPGEKDSVICLKGSQWSDIEEFCNRSCEVPTRLNSASLKQPYITQNYFPVGTVVEYECRPGYRREPSLSPKLTCLQNLKWSTAVEFCKKKSCPNPGEIRNGQIDVPGGILFGATISFSCNTGYKLFGSTSSFCLISGSSVQWSDPLPECREIYCPAPPQIDNGIIQGERDHYGYRQSVTYACNKGFTMIGEHSIYCTVNNDEGEWSGPPPECRGKSLTSKVPPTVQKPTTVNVPTTEVSPTSQKTTTKTTTPNAQATRSTPVSRTTKHFHETTPNKGSGTTSGTTRLLSGHTCFTLTGLLGTLVTMGLLT</sequence>
<name>DAF_HUMAN</name>
<reference key="1">
    <citation type="journal article" date="1987" name="Nature">
        <title>Cloning of decay-accelerating factor suggests novel use of splicing to generate two proteins.</title>
        <authorList>
            <person name="Caras I.W."/>
            <person name="Davitz M.A."/>
            <person name="Rhee L."/>
            <person name="Weddell G."/>
            <person name="Martin D.W. Jr."/>
            <person name="Nussenzweig V."/>
        </authorList>
    </citation>
    <scope>NUCLEOTIDE SEQUENCE [MRNA] (ISOFORMS 1 AND 2)</scope>
</reference>
<reference key="2">
    <citation type="journal article" date="2006" name="Genomics">
        <title>Molecular cloning and characterization of novel splicing variants of human decay-accelerating factor.</title>
        <authorList>
            <person name="Osuka F."/>
            <person name="Endo Y."/>
            <person name="Higuchi M."/>
            <person name="Suzuki H."/>
            <person name="Shio Y."/>
            <person name="Fujiu K."/>
            <person name="Kanno R."/>
            <person name="Oishi A."/>
            <person name="Terashima M."/>
            <person name="Fujita T."/>
            <person name="Gotoh M."/>
        </authorList>
    </citation>
    <scope>NUCLEOTIDE SEQUENCE [MRNA] (ISOFORMS 3; 4; 5; 6 AND 7)</scope>
    <scope>SUBCELLULAR LOCATION (ISOFORMS 3; 4; 5; 6 AND 7)</scope>
    <source>
        <tissue>Lung</tissue>
    </source>
</reference>
<reference key="3">
    <citation type="submission" date="2003-05" db="EMBL/GenBank/DDBJ databases">
        <title>Cloning of human full-length CDSs in BD Creator(TM) system donor vector.</title>
        <authorList>
            <person name="Kalnine N."/>
            <person name="Chen X."/>
            <person name="Rolfs A."/>
            <person name="Halleck A."/>
            <person name="Hines L."/>
            <person name="Eisenstein S."/>
            <person name="Koundinya M."/>
            <person name="Raphael J."/>
            <person name="Moreira D."/>
            <person name="Kelley T."/>
            <person name="LaBaer J."/>
            <person name="Lin Y."/>
            <person name="Phelan M."/>
            <person name="Farmer A."/>
        </authorList>
    </citation>
    <scope>NUCLEOTIDE SEQUENCE [LARGE SCALE MRNA] (ISOFORM 2)</scope>
</reference>
<reference key="4">
    <citation type="submission" date="2004-12" db="EMBL/GenBank/DDBJ databases">
        <authorList>
            <consortium name="SeattleSNPs variation discovery resource"/>
        </authorList>
    </citation>
    <scope>NUCLEOTIDE SEQUENCE [GENOMIC DNA]</scope>
    <scope>VARIANT LEU-52</scope>
</reference>
<reference key="5">
    <citation type="journal article" date="2006" name="Nature">
        <title>The DNA sequence and biological annotation of human chromosome 1.</title>
        <authorList>
            <person name="Gregory S.G."/>
            <person name="Barlow K.F."/>
            <person name="McLay K.E."/>
            <person name="Kaul R."/>
            <person name="Swarbreck D."/>
            <person name="Dunham A."/>
            <person name="Scott C.E."/>
            <person name="Howe K.L."/>
            <person name="Woodfine K."/>
            <person name="Spencer C.C.A."/>
            <person name="Jones M.C."/>
            <person name="Gillson C."/>
            <person name="Searle S."/>
            <person name="Zhou Y."/>
            <person name="Kokocinski F."/>
            <person name="McDonald L."/>
            <person name="Evans R."/>
            <person name="Phillips K."/>
            <person name="Atkinson A."/>
            <person name="Cooper R."/>
            <person name="Jones C."/>
            <person name="Hall R.E."/>
            <person name="Andrews T.D."/>
            <person name="Lloyd C."/>
            <person name="Ainscough R."/>
            <person name="Almeida J.P."/>
            <person name="Ambrose K.D."/>
            <person name="Anderson F."/>
            <person name="Andrew R.W."/>
            <person name="Ashwell R.I.S."/>
            <person name="Aubin K."/>
            <person name="Babbage A.K."/>
            <person name="Bagguley C.L."/>
            <person name="Bailey J."/>
            <person name="Beasley H."/>
            <person name="Bethel G."/>
            <person name="Bird C.P."/>
            <person name="Bray-Allen S."/>
            <person name="Brown J.Y."/>
            <person name="Brown A.J."/>
            <person name="Buckley D."/>
            <person name="Burton J."/>
            <person name="Bye J."/>
            <person name="Carder C."/>
            <person name="Chapman J.C."/>
            <person name="Clark S.Y."/>
            <person name="Clarke G."/>
            <person name="Clee C."/>
            <person name="Cobley V."/>
            <person name="Collier R.E."/>
            <person name="Corby N."/>
            <person name="Coville G.J."/>
            <person name="Davies J."/>
            <person name="Deadman R."/>
            <person name="Dunn M."/>
            <person name="Earthrowl M."/>
            <person name="Ellington A.G."/>
            <person name="Errington H."/>
            <person name="Frankish A."/>
            <person name="Frankland J."/>
            <person name="French L."/>
            <person name="Garner P."/>
            <person name="Garnett J."/>
            <person name="Gay L."/>
            <person name="Ghori M.R.J."/>
            <person name="Gibson R."/>
            <person name="Gilby L.M."/>
            <person name="Gillett W."/>
            <person name="Glithero R.J."/>
            <person name="Grafham D.V."/>
            <person name="Griffiths C."/>
            <person name="Griffiths-Jones S."/>
            <person name="Grocock R."/>
            <person name="Hammond S."/>
            <person name="Harrison E.S.I."/>
            <person name="Hart E."/>
            <person name="Haugen E."/>
            <person name="Heath P.D."/>
            <person name="Holmes S."/>
            <person name="Holt K."/>
            <person name="Howden P.J."/>
            <person name="Hunt A.R."/>
            <person name="Hunt S.E."/>
            <person name="Hunter G."/>
            <person name="Isherwood J."/>
            <person name="James R."/>
            <person name="Johnson C."/>
            <person name="Johnson D."/>
            <person name="Joy A."/>
            <person name="Kay M."/>
            <person name="Kershaw J.K."/>
            <person name="Kibukawa M."/>
            <person name="Kimberley A.M."/>
            <person name="King A."/>
            <person name="Knights A.J."/>
            <person name="Lad H."/>
            <person name="Laird G."/>
            <person name="Lawlor S."/>
            <person name="Leongamornlert D.A."/>
            <person name="Lloyd D.M."/>
            <person name="Loveland J."/>
            <person name="Lovell J."/>
            <person name="Lush M.J."/>
            <person name="Lyne R."/>
            <person name="Martin S."/>
            <person name="Mashreghi-Mohammadi M."/>
            <person name="Matthews L."/>
            <person name="Matthews N.S.W."/>
            <person name="McLaren S."/>
            <person name="Milne S."/>
            <person name="Mistry S."/>
            <person name="Moore M.J.F."/>
            <person name="Nickerson T."/>
            <person name="O'Dell C.N."/>
            <person name="Oliver K."/>
            <person name="Palmeiri A."/>
            <person name="Palmer S.A."/>
            <person name="Parker A."/>
            <person name="Patel D."/>
            <person name="Pearce A.V."/>
            <person name="Peck A.I."/>
            <person name="Pelan S."/>
            <person name="Phelps K."/>
            <person name="Phillimore B.J."/>
            <person name="Plumb R."/>
            <person name="Rajan J."/>
            <person name="Raymond C."/>
            <person name="Rouse G."/>
            <person name="Saenphimmachak C."/>
            <person name="Sehra H.K."/>
            <person name="Sheridan E."/>
            <person name="Shownkeen R."/>
            <person name="Sims S."/>
            <person name="Skuce C.D."/>
            <person name="Smith M."/>
            <person name="Steward C."/>
            <person name="Subramanian S."/>
            <person name="Sycamore N."/>
            <person name="Tracey A."/>
            <person name="Tromans A."/>
            <person name="Van Helmond Z."/>
            <person name="Wall M."/>
            <person name="Wallis J.M."/>
            <person name="White S."/>
            <person name="Whitehead S.L."/>
            <person name="Wilkinson J.E."/>
            <person name="Willey D.L."/>
            <person name="Williams H."/>
            <person name="Wilming L."/>
            <person name="Wray P.W."/>
            <person name="Wu Z."/>
            <person name="Coulson A."/>
            <person name="Vaudin M."/>
            <person name="Sulston J.E."/>
            <person name="Durbin R.M."/>
            <person name="Hubbard T."/>
            <person name="Wooster R."/>
            <person name="Dunham I."/>
            <person name="Carter N.P."/>
            <person name="McVean G."/>
            <person name="Ross M.T."/>
            <person name="Harrow J."/>
            <person name="Olson M.V."/>
            <person name="Beck S."/>
            <person name="Rogers J."/>
            <person name="Bentley D.R."/>
        </authorList>
    </citation>
    <scope>NUCLEOTIDE SEQUENCE [LARGE SCALE GENOMIC DNA]</scope>
</reference>
<reference key="6">
    <citation type="submission" date="2005-09" db="EMBL/GenBank/DDBJ databases">
        <authorList>
            <person name="Mural R.J."/>
            <person name="Istrail S."/>
            <person name="Sutton G.G."/>
            <person name="Florea L."/>
            <person name="Halpern A.L."/>
            <person name="Mobarry C.M."/>
            <person name="Lippert R."/>
            <person name="Walenz B."/>
            <person name="Shatkay H."/>
            <person name="Dew I."/>
            <person name="Miller J.R."/>
            <person name="Flanigan M.J."/>
            <person name="Edwards N.J."/>
            <person name="Bolanos R."/>
            <person name="Fasulo D."/>
            <person name="Halldorsson B.V."/>
            <person name="Hannenhalli S."/>
            <person name="Turner R."/>
            <person name="Yooseph S."/>
            <person name="Lu F."/>
            <person name="Nusskern D.R."/>
            <person name="Shue B.C."/>
            <person name="Zheng X.H."/>
            <person name="Zhong F."/>
            <person name="Delcher A.L."/>
            <person name="Huson D.H."/>
            <person name="Kravitz S.A."/>
            <person name="Mouchard L."/>
            <person name="Reinert K."/>
            <person name="Remington K.A."/>
            <person name="Clark A.G."/>
            <person name="Waterman M.S."/>
            <person name="Eichler E.E."/>
            <person name="Adams M.D."/>
            <person name="Hunkapiller M.W."/>
            <person name="Myers E.W."/>
            <person name="Venter J.C."/>
        </authorList>
    </citation>
    <scope>NUCLEOTIDE SEQUENCE [LARGE SCALE GENOMIC DNA]</scope>
</reference>
<reference key="7">
    <citation type="journal article" date="2004" name="Genome Res.">
        <title>The status, quality, and expansion of the NIH full-length cDNA project: the Mammalian Gene Collection (MGC).</title>
        <authorList>
            <consortium name="The MGC Project Team"/>
        </authorList>
    </citation>
    <scope>NUCLEOTIDE SEQUENCE [LARGE SCALE MRNA] (ISOFORM 1)</scope>
    <source>
        <tissue>Cervix</tissue>
    </source>
</reference>
<reference key="8">
    <citation type="journal article" date="1991" name="Proc. Natl. Acad. Sci. U.S.A.">
        <title>Characterization of the decay-accelerating factor gene promoter region.</title>
        <authorList>
            <person name="Ewulonu U.K."/>
            <person name="Ravi L."/>
            <person name="Medof M.E."/>
        </authorList>
    </citation>
    <scope>NUCLEOTIDE SEQUENCE [GENOMIC DNA] OF 1-100</scope>
</reference>
<reference key="9">
    <citation type="journal article" date="1987" name="Proc. Natl. Acad. Sci. U.S.A.">
        <title>Cloning and characterization of cDNAs encoding the complete sequence of decay-accelerating factor of human complement.</title>
        <authorList>
            <person name="Medof M.E."/>
            <person name="Lublin D.M."/>
            <person name="Holers V.M."/>
            <person name="Ayers D.J."/>
            <person name="Getty R.R."/>
            <person name="Leykam J.F."/>
            <person name="Atkinson J.P."/>
            <person name="Tykocinski M.L."/>
        </authorList>
    </citation>
    <scope>NUCLEOTIDE SEQUENCE [MRNA] OF 6-381 (ISOFORM 2)</scope>
</reference>
<reference key="10">
    <citation type="submission" date="1997-02" db="EMBL/GenBank/DDBJ databases">
        <title>Decay-acceleration factor (DAF; CD 55) in the brain of Alzheimer's disease patients.</title>
        <authorList>
            <person name="Kumar V.B."/>
            <person name="Hyung C."/>
            <person name="Nakra R."/>
            <person name="Walters M."/>
            <person name="Sasser T."/>
            <person name="Bernardo A."/>
        </authorList>
    </citation>
    <scope>NUCLEOTIDE SEQUENCE [MRNA] OF 35-381 (ISOFORM 2)</scope>
    <source>
        <tissue>Hippocampus</tissue>
    </source>
</reference>
<reference key="11">
    <citation type="journal article" date="1986" name="J. Biochem.">
        <title>Improved method for the isolation and preliminary characterization of human DAF (decay-accelerating factor).</title>
        <authorList>
            <person name="Sugita Y."/>
            <person name="Negoro T."/>
            <person name="Matsuda T."/>
            <person name="Sakamoto T."/>
            <person name="Tomita M."/>
        </authorList>
    </citation>
    <scope>PROTEIN SEQUENCE OF 35-63</scope>
</reference>
<reference key="12">
    <citation type="journal article" date="1991" name="Biochim. Biophys. Acta">
        <title>Isolation of two forms of decay-accelerating factor (DAF) from human urine.</title>
        <authorList>
            <person name="Nakano Y."/>
            <person name="Sugita Y."/>
            <person name="Ishikawa Y."/>
            <person name="Choi N.-H."/>
            <person name="Tobe T."/>
            <person name="Tomita M."/>
        </authorList>
    </citation>
    <scope>PROTEIN SEQUENCE OF 35-46</scope>
    <source>
        <tissue>Urine</tissue>
    </source>
</reference>
<reference key="13">
    <citation type="journal article" date="1991" name="J. Biol. Chem.">
        <title>Glycophospholipid membrane anchor attachment. Molecular analysis of the cleavage/attachment site.</title>
        <authorList>
            <person name="Moran P."/>
            <person name="Raab H."/>
            <person name="Kohr W.J."/>
            <person name="Caras I.W."/>
        </authorList>
    </citation>
    <scope>GPI-ANCHOR AT SER-353</scope>
</reference>
<reference key="14">
    <citation type="journal article" date="1992" name="Biochim. Biophys. Acta">
        <title>Complete determination of disulfide bonds localized within the short consensus repeat units of decay accelerating factor (CD55 antigen).</title>
        <authorList>
            <person name="Nakano Y."/>
            <person name="Sumida K."/>
            <person name="Kikuta N."/>
            <person name="Miura N.-H."/>
            <person name="Tobe T."/>
            <person name="Tomita M."/>
        </authorList>
    </citation>
    <scope>DISULFIDE BONDS IN SUSHI DOMAINS</scope>
</reference>
<reference key="15">
    <citation type="journal article" date="1994" name="EMBO J.">
        <title>Decay-accelerating factor CD55 is identified as the receptor for echovirus 7 using CELICS, a rapid immuno-focal cloning method.</title>
        <authorList>
            <person name="Ward T."/>
            <person name="Pipkin P.A."/>
            <person name="Clarkson N.A."/>
            <person name="Stone D.M."/>
            <person name="Minor P.D."/>
            <person name="Almond J.W."/>
        </authorList>
    </citation>
    <scope>FUNCTION (MICROBIAL INFECTION)</scope>
    <scope>INTERACTION WITH ECHOVIRUS CAPSID PROTEINS</scope>
</reference>
<reference key="16">
    <citation type="journal article" date="1994" name="Proc. Natl. Acad. Sci. U.S.A.">
        <title>Decay-accelerating factor (CD55), a glycosylphosphatidylinositol-anchored complement regulatory protein, is a receptor for several echoviruses.</title>
        <authorList>
            <person name="Bergelson J.M."/>
            <person name="Chan M."/>
            <person name="Solomon K.R."/>
            <person name="St John N.F."/>
            <person name="Lin H."/>
            <person name="Finberg R.W."/>
        </authorList>
    </citation>
    <scope>INTERACTION WITH HUMAN ECHOVIRUSES 6/7/11/12/20/21 CAPSID PROTEINS</scope>
</reference>
<reference key="17">
    <citation type="journal article" date="1995" name="J. Virol.">
        <title>Coxsackieviruses B1, B3, and B5 use decay accelerating factor as a receptor for cell attachment.</title>
        <authorList>
            <person name="Shafren D.R."/>
            <person name="Bates R.C."/>
            <person name="Agrez M.V."/>
            <person name="Herd R.L."/>
            <person name="Burns G.F."/>
            <person name="Barry R.D."/>
        </authorList>
    </citation>
    <scope>INTERACTION WITH COXSACKIEVIRUSES B1/B3/B5 CAPSID PROTEINS</scope>
</reference>
<reference key="18">
    <citation type="journal article" date="1996" name="J. Virol.">
        <title>The HeLa cell receptor for enterovirus 70 is decay-accelerating factor (CD55).</title>
        <authorList>
            <person name="Karnauchow T.M."/>
            <person name="Tolson D.L."/>
            <person name="Harrison B.A."/>
            <person name="Altman E."/>
            <person name="Lublin D.M."/>
            <person name="Dimock K."/>
        </authorList>
    </citation>
    <scope>FUNCTION (MICROBIAL INFECTION)</scope>
    <scope>INTERACTION WITH HUMAN ENTEROVIRUS 70 CAPSID PROTEINS</scope>
</reference>
<reference key="19">
    <citation type="journal article" date="1997" name="J. Virol.">
        <title>Coxsackievirus A21 binds to decay-accelerating factor but requires intercellular adhesion molecule 1 for cell entry.</title>
        <authorList>
            <person name="Shafren D.R."/>
            <person name="Dorahy D.J."/>
            <person name="Ingham R.A."/>
            <person name="Burns G.F."/>
            <person name="Barry R.D."/>
        </authorList>
    </citation>
    <scope>FUNCTION (MICROBIAL INFECTION)</scope>
    <scope>INTERACTION WITH COXSACKIEVIRUS A21 CAPSID PROTEINS</scope>
</reference>
<reference key="20">
    <citation type="journal article" date="2001" name="J. Biol. Chem.">
        <title>Molecular analysis of the epidermal growth factor-like short consensus repeat domain-mediated protein-protein interactions: dissection of the CD97-CD55 complex.</title>
        <authorList>
            <person name="Lin H.-H."/>
            <person name="Stacey M."/>
            <person name="Saxby C."/>
            <person name="Knott V."/>
            <person name="Chaudhry Y."/>
            <person name="Evans D."/>
            <person name="Gordon S."/>
            <person name="McKnight A.J."/>
            <person name="Handford P."/>
            <person name="Lea S."/>
        </authorList>
    </citation>
    <scope>INTERACTION WITH ADGRE5</scope>
</reference>
<reference key="21">
    <citation type="journal article" date="2002" name="J. Clin. Microbiol.">
        <title>Human rhinovirus 87 and enterovirus 68 represent a unique serotype with rhinovirus and enterovirus features.</title>
        <authorList>
            <person name="Blomqvist S."/>
            <person name="Savolainen C."/>
            <person name="Raman L."/>
            <person name="Roivainen M."/>
            <person name="Hovi T."/>
        </authorList>
    </citation>
    <scope>FUNCTION (MICROBIAL INFECTION)</scope>
    <scope>INTERACTION WITH ENTEROVIRUS D68 CAPSID PROTEINS</scope>
</reference>
<reference key="22">
    <citation type="journal article" date="2007" name="J. Virol.">
        <title>Interaction of decay-accelerating factor with coxsackievirus B3.</title>
        <authorList>
            <person name="Hafenstein S."/>
            <person name="Bowman V.D."/>
            <person name="Chipman P.R."/>
            <person name="Bator Kelly C.M."/>
            <person name="Lin F."/>
            <person name="Medof M.E."/>
            <person name="Rossmann M.G."/>
        </authorList>
    </citation>
    <scope>INTERACTION WITH COXSACKIEVIRUS B3 CAPSID PROTEINS</scope>
</reference>
<reference key="23">
    <citation type="journal article" date="2009" name="J. Proteome Res.">
        <title>Glycoproteomics analysis of human liver tissue by combination of multiple enzyme digestion and hydrazide chemistry.</title>
        <authorList>
            <person name="Chen R."/>
            <person name="Jiang X."/>
            <person name="Sun D."/>
            <person name="Han G."/>
            <person name="Wang F."/>
            <person name="Ye M."/>
            <person name="Wang L."/>
            <person name="Zou H."/>
        </authorList>
    </citation>
    <scope>GLYCOSYLATION [LARGE SCALE ANALYSIS] AT ASN-95</scope>
    <source>
        <tissue>Liver</tissue>
    </source>
</reference>
<reference key="24">
    <citation type="journal article" date="2011" name="BMC Syst. Biol.">
        <title>Initial characterization of the human central proteome.</title>
        <authorList>
            <person name="Burkard T.R."/>
            <person name="Planyavsky M."/>
            <person name="Kaupe I."/>
            <person name="Breitwieser F.P."/>
            <person name="Buerckstuemmer T."/>
            <person name="Bennett K.L."/>
            <person name="Superti-Furga G."/>
            <person name="Colinge J."/>
        </authorList>
    </citation>
    <scope>IDENTIFICATION BY MASS SPECTROMETRY [LARGE SCALE ANALYSIS]</scope>
</reference>
<reference key="25">
    <citation type="journal article" date="2015" name="PLoS ONE">
        <title>Obif, a transmembrane protein, is required for bone mineralization and spermatogenesis in mice.</title>
        <authorList>
            <person name="Mizuhashi K."/>
            <person name="Chaya T."/>
            <person name="Kanamoto T."/>
            <person name="Omori Y."/>
            <person name="Furukawa T."/>
        </authorList>
    </citation>
    <scope>GLYCOSYLATION</scope>
</reference>
<reference key="26">
    <citation type="journal article" date="2017" name="N. Engl. J. Med.">
        <title>Loss of CD55 in eculizumab-responsive protein-losing enteropathy.</title>
        <authorList>
            <person name="Kurolap A."/>
            <person name="Eshach-Adiv O."/>
            <person name="Hershkovitz T."/>
            <person name="Paperna T."/>
            <person name="Mory A."/>
            <person name="Oz-Levi D."/>
            <person name="Zohar Y."/>
            <person name="Mandel H."/>
            <person name="Chezar J."/>
            <person name="Azoulay D."/>
            <person name="Peleg S."/>
            <person name="Half E.E."/>
            <person name="Yahalom V."/>
            <person name="Finkel L."/>
            <person name="Weissbrod O."/>
            <person name="Geiger D."/>
            <person name="Tabib A."/>
            <person name="Shaoul R."/>
            <person name="Magen D."/>
            <person name="Bonstein L."/>
            <person name="Mevorach D."/>
            <person name="Baris H.N."/>
        </authorList>
    </citation>
    <scope>INVOLVEMENT IN CHAPLE</scope>
</reference>
<reference key="27">
    <citation type="journal article" date="1994" name="Blood">
        <title>Molecular basis of reduced or absent expression of decay-accelerating factor in Cromer blood group phenotypes.</title>
        <authorList>
            <person name="Lublin D.M."/>
            <person name="Mallinson G."/>
            <person name="Poole J."/>
            <person name="Reid M.E."/>
            <person name="Thompson E.S."/>
            <person name="Ferdman B.R."/>
            <person name="Telen M.J."/>
            <person name="Anstee D.J."/>
            <person name="Tanner M.J.A."/>
        </authorList>
    </citation>
    <scope>VARIANT BLOOD GROUP DR(A-) LEU-199</scope>
</reference>
<reference key="28">
    <citation type="journal article" date="2003" name="Transfusion">
        <title>GUTI: a new antigen in the Cromer blood group system.</title>
        <authorList>
            <person name="Storry J.R."/>
            <person name="Sausais L."/>
            <person name="Hue-Roye K."/>
            <person name="Mudiwa F."/>
            <person name="Ferrer Z."/>
            <person name="Blajchman M.A."/>
            <person name="Lublin D.M."/>
            <person name="Ma B.W."/>
            <person name="Miquel J.F."/>
            <person name="Nervi F."/>
            <person name="Pereira J."/>
            <person name="Reid M.E."/>
        </authorList>
    </citation>
    <scope>VARIANT BLOOD GROUP GUTI(-) HIS-240</scope>
    <scope>POLYMORPHISM</scope>
</reference>
<reference key="29">
    <citation type="journal article" date="1991" name="Blood">
        <title>Biochemical studies on red blood cells from a patient with the Inab phenotype (decay-accelerating factor deficiency).</title>
        <authorList>
            <person name="Reid M.E."/>
            <person name="Mallinson G."/>
            <person name="Sim R.B."/>
            <person name="Poole J."/>
            <person name="Pausch V."/>
            <person name="Merry A.H."/>
            <person name="Liew Y.W."/>
            <person name="Tanner M.J.A."/>
        </authorList>
    </citation>
    <scope>INVOLVEMENT IN BLOOD GROUP INAB</scope>
</reference>
<reference key="30">
    <citation type="journal article" date="2003" name="J. Biol. Chem.">
        <title>Mapping CD55 function. The structure of two pathogen-binding domains at 1.7 A.</title>
        <authorList>
            <person name="Williams P."/>
            <person name="Chaudhry Y."/>
            <person name="Goodfellow I.G."/>
            <person name="Billington J."/>
            <person name="Powell R."/>
            <person name="Spiller O.B."/>
            <person name="Evans D.J."/>
            <person name="Lea S."/>
        </authorList>
    </citation>
    <scope>X-RAY CRYSTALLOGRAPHY (1.7 ANGSTROMS) OF 161-285</scope>
</reference>
<reference key="31">
    <citation type="journal article" date="2004" name="Proc. Natl. Acad. Sci. U.S.A.">
        <title>Complement regulation at the molecular level: the structure of decay-accelerating factor.</title>
        <authorList>
            <person name="Lukacik P."/>
            <person name="Roversi P."/>
            <person name="White J."/>
            <person name="Esser D."/>
            <person name="Smith G.P."/>
            <person name="Billington J."/>
            <person name="Williams P.A."/>
            <person name="Rudd P.M."/>
            <person name="Wormald M.R."/>
            <person name="Harvey D.J."/>
            <person name="Crispin M.D."/>
            <person name="Radcliffe C.M."/>
            <person name="Dwek R.A."/>
            <person name="Evans D.J."/>
            <person name="Morgan B.P."/>
            <person name="Smith R.A."/>
            <person name="Lea S.M."/>
        </authorList>
    </citation>
    <scope>X-RAY CRYSTALLOGRAPHY (2.6 ANGSTROMS) OF 35-286</scope>
</reference>
<reference key="32">
    <citation type="journal article" date="2003" name="Proc. Natl. Acad. Sci. U.S.A.">
        <title>Solution structure of a functionally active fragment of decay-accelerating factor.</title>
        <authorList>
            <person name="Uhrinova S."/>
            <person name="Lin F."/>
            <person name="Ball G."/>
            <person name="Bromek K."/>
            <person name="Uhrin D."/>
            <person name="Medof M.E."/>
            <person name="Barlow P.N."/>
        </authorList>
    </citation>
    <scope>STRUCTURE BY NMR OF 95-223</scope>
</reference>
<reference key="33">
    <citation type="journal article" date="2017" name="N. Engl. J. Med.">
        <title>CD55 deficiency, early-onset protein-losing enteropathy, and thrombosis.</title>
        <authorList>
            <person name="Ozen A."/>
            <person name="Comrie W.A."/>
            <person name="Ardy R.C."/>
            <person name="Dominguez Conde C."/>
            <person name="Dalgic B."/>
            <person name="Beser O.F."/>
            <person name="Morawski A.R."/>
            <person name="Karakoc-Aydiner E."/>
            <person name="Tutar E."/>
            <person name="Baris S."/>
            <person name="Ozcay F."/>
            <person name="Serwas N.K."/>
            <person name="Zhang Y."/>
            <person name="Matthews H.F."/>
            <person name="Pittaluga S."/>
            <person name="Folio L.R."/>
            <person name="Unlusoy Aksu A."/>
            <person name="McElwee J.J."/>
            <person name="Krolo A."/>
            <person name="Kiykim A."/>
            <person name="Baris Z."/>
            <person name="Gulsan M."/>
            <person name="Ogulur I."/>
            <person name="Snapper S.B."/>
            <person name="Houwen R.H.J."/>
            <person name="Leavis H.L."/>
            <person name="Ertem D."/>
            <person name="Kain R."/>
            <person name="Sari S."/>
            <person name="Erkan T."/>
            <person name="Su H.C."/>
            <person name="Boztug K."/>
            <person name="Lenardo M.J."/>
        </authorList>
    </citation>
    <scope>VARIANT CHAPLE SER-267</scope>
    <scope>CHARACTERIZATION OF VARIANT CHAPLE SER-267</scope>
    <scope>FUNCTION</scope>
</reference>
<dbReference type="EMBL" id="M31516">
    <property type="protein sequence ID" value="AAA52169.1"/>
    <property type="molecule type" value="mRNA"/>
</dbReference>
<dbReference type="EMBL" id="M30142">
    <property type="protein sequence ID" value="AAA52168.1"/>
    <property type="molecule type" value="mRNA"/>
</dbReference>
<dbReference type="EMBL" id="AB240566">
    <property type="protein sequence ID" value="BAE97422.1"/>
    <property type="molecule type" value="mRNA"/>
</dbReference>
<dbReference type="EMBL" id="AB240567">
    <property type="protein sequence ID" value="BAE97423.1"/>
    <property type="molecule type" value="mRNA"/>
</dbReference>
<dbReference type="EMBL" id="AB240568">
    <property type="protein sequence ID" value="BAE97424.1"/>
    <property type="molecule type" value="mRNA"/>
</dbReference>
<dbReference type="EMBL" id="AB240569">
    <property type="protein sequence ID" value="BAE97425.1"/>
    <property type="molecule type" value="mRNA"/>
</dbReference>
<dbReference type="EMBL" id="AB240570">
    <property type="protein sequence ID" value="BAE97426.1"/>
    <property type="molecule type" value="mRNA"/>
</dbReference>
<dbReference type="EMBL" id="BT007159">
    <property type="protein sequence ID" value="AAP35823.1"/>
    <property type="molecule type" value="mRNA"/>
</dbReference>
<dbReference type="EMBL" id="AY851161">
    <property type="protein sequence ID" value="AAW29942.1"/>
    <property type="molecule type" value="Genomic_DNA"/>
</dbReference>
<dbReference type="EMBL" id="AL391597">
    <property type="status" value="NOT_ANNOTATED_CDS"/>
    <property type="molecule type" value="Genomic_DNA"/>
</dbReference>
<dbReference type="EMBL" id="AL596218">
    <property type="status" value="NOT_ANNOTATED_CDS"/>
    <property type="molecule type" value="Genomic_DNA"/>
</dbReference>
<dbReference type="EMBL" id="CH471100">
    <property type="protein sequence ID" value="EAW93485.1"/>
    <property type="molecule type" value="Genomic_DNA"/>
</dbReference>
<dbReference type="EMBL" id="CH471100">
    <property type="protein sequence ID" value="EAW93487.1"/>
    <property type="molecule type" value="Genomic_DNA"/>
</dbReference>
<dbReference type="EMBL" id="CH471100">
    <property type="protein sequence ID" value="EAW93488.1"/>
    <property type="molecule type" value="Genomic_DNA"/>
</dbReference>
<dbReference type="EMBL" id="CH471100">
    <property type="protein sequence ID" value="EAW93491.1"/>
    <property type="molecule type" value="Genomic_DNA"/>
</dbReference>
<dbReference type="EMBL" id="BC001288">
    <property type="protein sequence ID" value="AAH01288.1"/>
    <property type="molecule type" value="mRNA"/>
</dbReference>
<dbReference type="EMBL" id="M64653">
    <property type="protein sequence ID" value="AAA52170.1"/>
    <property type="molecule type" value="Genomic_DNA"/>
</dbReference>
<dbReference type="EMBL" id="M64356">
    <property type="protein sequence ID" value="AAA52170.1"/>
    <property type="status" value="JOINED"/>
    <property type="molecule type" value="Genomic_DNA"/>
</dbReference>
<dbReference type="EMBL" id="M15799">
    <property type="protein sequence ID" value="AAA52167.1"/>
    <property type="molecule type" value="mRNA"/>
</dbReference>
<dbReference type="EMBL" id="U88576">
    <property type="protein sequence ID" value="AAB48622.1"/>
    <property type="molecule type" value="mRNA"/>
</dbReference>
<dbReference type="EMBL" id="S72858">
    <property type="protein sequence ID" value="AAC60633.1"/>
    <property type="molecule type" value="Genomic_DNA"/>
</dbReference>
<dbReference type="CCDS" id="CCDS31006.1">
    <molecule id="P08174-1"/>
</dbReference>
<dbReference type="CCDS" id="CCDS44307.1">
    <molecule id="P08174-2"/>
</dbReference>
<dbReference type="CCDS" id="CCDS86046.1">
    <molecule id="P08174-5"/>
</dbReference>
<dbReference type="CCDS" id="CCDS86047.1">
    <molecule id="P08174-3"/>
</dbReference>
<dbReference type="PIR" id="A26359">
    <property type="entry name" value="A26359"/>
</dbReference>
<dbReference type="PIR" id="B26359">
    <property type="entry name" value="B26359"/>
</dbReference>
<dbReference type="RefSeq" id="NP_000565.1">
    <molecule id="P08174-1"/>
    <property type="nucleotide sequence ID" value="NM_000574.5"/>
</dbReference>
<dbReference type="RefSeq" id="NP_001108224.1">
    <molecule id="P08174-2"/>
    <property type="nucleotide sequence ID" value="NM_001114752.3"/>
</dbReference>
<dbReference type="RefSeq" id="NP_001287832.1">
    <molecule id="P08174-5"/>
    <property type="nucleotide sequence ID" value="NM_001300903.2"/>
</dbReference>
<dbReference type="RefSeq" id="NP_001287833.1">
    <molecule id="P08174-3"/>
    <property type="nucleotide sequence ID" value="NM_001300904.2"/>
</dbReference>
<dbReference type="RefSeq" id="XP_054190685.1">
    <molecule id="P08174-7"/>
    <property type="nucleotide sequence ID" value="XM_054334710.1"/>
</dbReference>
<dbReference type="PDB" id="1H03">
    <property type="method" value="X-ray"/>
    <property type="resolution" value="1.70 A"/>
    <property type="chains" value="P/Q=161-285"/>
</dbReference>
<dbReference type="PDB" id="1H04">
    <property type="method" value="X-ray"/>
    <property type="resolution" value="2.00 A"/>
    <property type="chains" value="P=161-285"/>
</dbReference>
<dbReference type="PDB" id="1H2P">
    <property type="method" value="X-ray"/>
    <property type="resolution" value="2.80 A"/>
    <property type="chains" value="P=161-285"/>
</dbReference>
<dbReference type="PDB" id="1H2Q">
    <property type="method" value="X-ray"/>
    <property type="resolution" value="3.00 A"/>
    <property type="chains" value="P=161-285"/>
</dbReference>
<dbReference type="PDB" id="1M11">
    <property type="method" value="EM"/>
    <property type="resolution" value="16.00 A"/>
    <property type="chains" value="R=35-277"/>
</dbReference>
<dbReference type="PDB" id="1NWV">
    <property type="method" value="NMR"/>
    <property type="chains" value="A=96-222"/>
</dbReference>
<dbReference type="PDB" id="1OJV">
    <property type="method" value="X-ray"/>
    <property type="resolution" value="2.30 A"/>
    <property type="chains" value="A/B=35-285"/>
</dbReference>
<dbReference type="PDB" id="1OJW">
    <property type="method" value="X-ray"/>
    <property type="resolution" value="2.30 A"/>
    <property type="chains" value="A/B=35-285"/>
</dbReference>
<dbReference type="PDB" id="1OJY">
    <property type="method" value="X-ray"/>
    <property type="resolution" value="2.60 A"/>
    <property type="chains" value="A/B/C/D=35-285"/>
</dbReference>
<dbReference type="PDB" id="1OK1">
    <property type="method" value="X-ray"/>
    <property type="resolution" value="2.60 A"/>
    <property type="chains" value="A/B=35-285"/>
</dbReference>
<dbReference type="PDB" id="1OK2">
    <property type="method" value="X-ray"/>
    <property type="resolution" value="2.50 A"/>
    <property type="chains" value="A/B=35-285"/>
</dbReference>
<dbReference type="PDB" id="1OK3">
    <property type="method" value="X-ray"/>
    <property type="resolution" value="2.20 A"/>
    <property type="chains" value="A/B=35-285"/>
</dbReference>
<dbReference type="PDB" id="1OK9">
    <property type="method" value="X-ray"/>
    <property type="resolution" value="3.00 A"/>
    <property type="chains" value="A/B=35-285"/>
</dbReference>
<dbReference type="PDB" id="1UOT">
    <property type="method" value="X-ray"/>
    <property type="resolution" value="3.00 A"/>
    <property type="chains" value="P=161-285"/>
</dbReference>
<dbReference type="PDB" id="1UPN">
    <property type="method" value="EM"/>
    <property type="resolution" value="16.00 A"/>
    <property type="chains" value="E=157-285"/>
</dbReference>
<dbReference type="PDB" id="2C8I">
    <property type="method" value="EM"/>
    <property type="resolution" value="14.00 A"/>
    <property type="chains" value="E=35-285"/>
</dbReference>
<dbReference type="PDB" id="2QZD">
    <property type="method" value="EM"/>
    <property type="chains" value="A=222-285"/>
</dbReference>
<dbReference type="PDB" id="2QZF">
    <property type="method" value="EM"/>
    <property type="chains" value="A=35-94"/>
</dbReference>
<dbReference type="PDB" id="2QZH">
    <property type="method" value="EM"/>
    <property type="resolution" value="14.00 A"/>
    <property type="chains" value="A=96-222"/>
</dbReference>
<dbReference type="PDB" id="3IYP">
    <property type="method" value="EM"/>
    <property type="chains" value="F=1-381"/>
</dbReference>
<dbReference type="PDB" id="3J24">
    <property type="method" value="EM"/>
    <property type="resolution" value="9.00 A"/>
    <property type="chains" value="B=35-285"/>
</dbReference>
<dbReference type="PDB" id="5FOA">
    <property type="method" value="X-ray"/>
    <property type="resolution" value="4.19 A"/>
    <property type="chains" value="E/F=97-285"/>
</dbReference>
<dbReference type="PDB" id="6ILJ">
    <property type="method" value="EM"/>
    <property type="resolution" value="3.60 A"/>
    <property type="chains" value="E=94-285"/>
</dbReference>
<dbReference type="PDB" id="6ILK">
    <property type="method" value="EM"/>
    <property type="resolution" value="3.00 A"/>
    <property type="chains" value="E=94-285"/>
</dbReference>
<dbReference type="PDB" id="6LA5">
    <property type="method" value="EM"/>
    <property type="resolution" value="2.86 A"/>
    <property type="chains" value="E=161-285"/>
</dbReference>
<dbReference type="PDB" id="7C9W">
    <property type="method" value="EM"/>
    <property type="resolution" value="3.60 A"/>
    <property type="chains" value="E=94-285"/>
</dbReference>
<dbReference type="PDB" id="7DO4">
    <property type="method" value="X-ray"/>
    <property type="resolution" value="3.20 A"/>
    <property type="chains" value="B=35-284"/>
</dbReference>
<dbReference type="PDB" id="7VY5">
    <property type="method" value="EM"/>
    <property type="resolution" value="3.15 A"/>
    <property type="chains" value="E=98-220"/>
</dbReference>
<dbReference type="PDB" id="7VY6">
    <property type="method" value="EM"/>
    <property type="resolution" value="3.02 A"/>
    <property type="chains" value="E=35-285"/>
</dbReference>
<dbReference type="PDB" id="8B8R">
    <property type="method" value="EM"/>
    <property type="resolution" value="3.10 A"/>
    <property type="chains" value="E=28-285"/>
</dbReference>
<dbReference type="PDB" id="8K9R">
    <property type="method" value="EM"/>
    <property type="resolution" value="2.68 A"/>
    <property type="chains" value="B=339-353"/>
</dbReference>
<dbReference type="PDB" id="8K9T">
    <property type="method" value="EM"/>
    <property type="resolution" value="2.66 A"/>
    <property type="chains" value="B=339-353"/>
</dbReference>
<dbReference type="PDBsum" id="1H03"/>
<dbReference type="PDBsum" id="1H04"/>
<dbReference type="PDBsum" id="1H2P"/>
<dbReference type="PDBsum" id="1H2Q"/>
<dbReference type="PDBsum" id="1M11"/>
<dbReference type="PDBsum" id="1NWV"/>
<dbReference type="PDBsum" id="1OJV"/>
<dbReference type="PDBsum" id="1OJW"/>
<dbReference type="PDBsum" id="1OJY"/>
<dbReference type="PDBsum" id="1OK1"/>
<dbReference type="PDBsum" id="1OK2"/>
<dbReference type="PDBsum" id="1OK3"/>
<dbReference type="PDBsum" id="1OK9"/>
<dbReference type="PDBsum" id="1UOT"/>
<dbReference type="PDBsum" id="1UPN"/>
<dbReference type="PDBsum" id="2C8I"/>
<dbReference type="PDBsum" id="2QZD"/>
<dbReference type="PDBsum" id="2QZF"/>
<dbReference type="PDBsum" id="2QZH"/>
<dbReference type="PDBsum" id="3IYP"/>
<dbReference type="PDBsum" id="3J24"/>
<dbReference type="PDBsum" id="5FOA"/>
<dbReference type="PDBsum" id="6ILJ"/>
<dbReference type="PDBsum" id="6ILK"/>
<dbReference type="PDBsum" id="6LA5"/>
<dbReference type="PDBsum" id="7C9W"/>
<dbReference type="PDBsum" id="7DO4"/>
<dbReference type="PDBsum" id="7VY5"/>
<dbReference type="PDBsum" id="7VY6"/>
<dbReference type="PDBsum" id="8B8R"/>
<dbReference type="PDBsum" id="8K9R"/>
<dbReference type="PDBsum" id="8K9T"/>
<dbReference type="BMRB" id="P08174"/>
<dbReference type="EMDB" id="EMD-0856"/>
<dbReference type="EMDB" id="EMD-1412"/>
<dbReference type="EMDB" id="EMD-15920"/>
<dbReference type="EMDB" id="EMD-15930"/>
<dbReference type="EMDB" id="EMD-30319"/>
<dbReference type="EMDB" id="EMD-32194"/>
<dbReference type="EMDB" id="EMD-32195"/>
<dbReference type="EMDB" id="EMD-36996"/>
<dbReference type="EMDB" id="EMD-36997"/>
<dbReference type="EMDB" id="EMD-5179"/>
<dbReference type="EMDB" id="EMD-5475"/>
<dbReference type="EMDB" id="EMD-9684"/>
<dbReference type="EMDB" id="EMD-9685"/>
<dbReference type="SMR" id="P08174"/>
<dbReference type="BioGRID" id="107974">
    <property type="interactions" value="62"/>
</dbReference>
<dbReference type="FunCoup" id="P08174">
    <property type="interactions" value="237"/>
</dbReference>
<dbReference type="IntAct" id="P08174">
    <property type="interactions" value="25"/>
</dbReference>
<dbReference type="MINT" id="P08174"/>
<dbReference type="STRING" id="9606.ENSP00000356030"/>
<dbReference type="BindingDB" id="P08174"/>
<dbReference type="ChEMBL" id="CHEMBL4879428"/>
<dbReference type="DrugBank" id="DB00446">
    <property type="generic name" value="Chloramphenicol"/>
</dbReference>
<dbReference type="GlyConnect" id="1151">
    <property type="glycosylation" value="6 N-Linked glycans (1 site)"/>
</dbReference>
<dbReference type="GlyCosmos" id="P08174">
    <property type="glycosylation" value="1 site, 6 glycans"/>
</dbReference>
<dbReference type="GlyGen" id="P08174">
    <property type="glycosylation" value="6 sites, 13 N-linked glycans (1 site), 2 O-linked glycans (5 sites)"/>
</dbReference>
<dbReference type="iPTMnet" id="P08174"/>
<dbReference type="PhosphoSitePlus" id="P08174"/>
<dbReference type="SwissPalm" id="P08174"/>
<dbReference type="BioMuta" id="CD55"/>
<dbReference type="DMDM" id="60416353"/>
<dbReference type="jPOST" id="P08174"/>
<dbReference type="MassIVE" id="P08174"/>
<dbReference type="PaxDb" id="9606-ENSP00000356030"/>
<dbReference type="PeptideAtlas" id="P08174"/>
<dbReference type="ProteomicsDB" id="52078">
    <molecule id="P08174-1"/>
</dbReference>
<dbReference type="ProteomicsDB" id="52079">
    <molecule id="P08174-2"/>
</dbReference>
<dbReference type="ProteomicsDB" id="60351"/>
<dbReference type="ProteomicsDB" id="60352"/>
<dbReference type="ProteomicsDB" id="60353"/>
<dbReference type="Pumba" id="P08174"/>
<dbReference type="ABCD" id="P08174">
    <property type="antibodies" value="5 sequenced antibodies"/>
</dbReference>
<dbReference type="Antibodypedia" id="710">
    <property type="antibodies" value="1789 antibodies from 48 providers"/>
</dbReference>
<dbReference type="DNASU" id="1604"/>
<dbReference type="Ensembl" id="ENST00000314754.12">
    <molecule id="P08174-2"/>
    <property type="protein sequence ID" value="ENSP00000316333.8"/>
    <property type="gene ID" value="ENSG00000196352.18"/>
</dbReference>
<dbReference type="Ensembl" id="ENST00000367064.9">
    <molecule id="P08174-1"/>
    <property type="protein sequence ID" value="ENSP00000356031.4"/>
    <property type="gene ID" value="ENSG00000196352.18"/>
</dbReference>
<dbReference type="Ensembl" id="ENST00000644836.1">
    <molecule id="P08174-3"/>
    <property type="protein sequence ID" value="ENSP00000495518.1"/>
    <property type="gene ID" value="ENSG00000196352.18"/>
</dbReference>
<dbReference type="Ensembl" id="ENST00000645323.1">
    <molecule id="P08174-5"/>
    <property type="protein sequence ID" value="ENSP00000496251.1"/>
    <property type="gene ID" value="ENSG00000196352.18"/>
</dbReference>
<dbReference type="GeneID" id="1604"/>
<dbReference type="KEGG" id="hsa:1604"/>
<dbReference type="MANE-Select" id="ENST00000367064.9">
    <property type="protein sequence ID" value="ENSP00000356031.4"/>
    <property type="RefSeq nucleotide sequence ID" value="NM_000574.5"/>
    <property type="RefSeq protein sequence ID" value="NP_000565.1"/>
</dbReference>
<dbReference type="UCSC" id="uc001hfq.5">
    <molecule id="P08174-1"/>
    <property type="organism name" value="human"/>
</dbReference>
<dbReference type="AGR" id="HGNC:2665"/>
<dbReference type="CTD" id="1604"/>
<dbReference type="DisGeNET" id="1604"/>
<dbReference type="GeneCards" id="CD55"/>
<dbReference type="HGNC" id="HGNC:2665">
    <property type="gene designation" value="CD55"/>
</dbReference>
<dbReference type="HPA" id="ENSG00000196352">
    <property type="expression patterns" value="Low tissue specificity"/>
</dbReference>
<dbReference type="MalaCards" id="CD55"/>
<dbReference type="MIM" id="125240">
    <property type="type" value="gene"/>
</dbReference>
<dbReference type="MIM" id="226300">
    <property type="type" value="phenotype"/>
</dbReference>
<dbReference type="MIM" id="613793">
    <property type="type" value="phenotype"/>
</dbReference>
<dbReference type="neXtProt" id="NX_P08174"/>
<dbReference type="OpenTargets" id="ENSG00000196352"/>
<dbReference type="Orphanet" id="566175">
    <property type="disease" value="Complement hyperactivation-angiopathic thrombosis-protein-losing enteropathy syndrome"/>
</dbReference>
<dbReference type="PharmGKB" id="PA27137"/>
<dbReference type="VEuPathDB" id="HostDB:ENSG00000196352"/>
<dbReference type="eggNOG" id="ENOG502SKPE">
    <property type="taxonomic scope" value="Eukaryota"/>
</dbReference>
<dbReference type="GeneTree" id="ENSGT00940000162307"/>
<dbReference type="InParanoid" id="P08174"/>
<dbReference type="OMA" id="PTCTEIF"/>
<dbReference type="OrthoDB" id="406096at2759"/>
<dbReference type="PAN-GO" id="P08174">
    <property type="GO annotations" value="3 GO annotations based on evolutionary models"/>
</dbReference>
<dbReference type="PhylomeDB" id="P08174"/>
<dbReference type="TreeFam" id="TF334137"/>
<dbReference type="PathwayCommons" id="P08174"/>
<dbReference type="Reactome" id="R-HSA-373080">
    <property type="pathway name" value="Class B/2 (Secretin family receptors)"/>
</dbReference>
<dbReference type="Reactome" id="R-HSA-6798695">
    <property type="pathway name" value="Neutrophil degranulation"/>
</dbReference>
<dbReference type="Reactome" id="R-HSA-6807878">
    <property type="pathway name" value="COPI-mediated anterograde transport"/>
</dbReference>
<dbReference type="Reactome" id="R-HSA-977606">
    <property type="pathway name" value="Regulation of Complement cascade"/>
</dbReference>
<dbReference type="SignaLink" id="P08174"/>
<dbReference type="SIGNOR" id="P08174"/>
<dbReference type="BioGRID-ORCS" id="1604">
    <property type="hits" value="8 hits in 1169 CRISPR screens"/>
</dbReference>
<dbReference type="ChiTaRS" id="CD55">
    <property type="organism name" value="human"/>
</dbReference>
<dbReference type="EvolutionaryTrace" id="P08174"/>
<dbReference type="GeneWiki" id="Decay-accelerating_factor"/>
<dbReference type="GenomeRNAi" id="1604"/>
<dbReference type="Pharos" id="P08174">
    <property type="development level" value="Tbio"/>
</dbReference>
<dbReference type="PRO" id="PR:P08174"/>
<dbReference type="Proteomes" id="UP000005640">
    <property type="component" value="Chromosome 1"/>
</dbReference>
<dbReference type="RNAct" id="P08174">
    <property type="molecule type" value="protein"/>
</dbReference>
<dbReference type="Bgee" id="ENSG00000196352">
    <property type="expression patterns" value="Expressed in parotid gland and 210 other cell types or tissues"/>
</dbReference>
<dbReference type="ExpressionAtlas" id="P08174">
    <property type="expression patterns" value="baseline and differential"/>
</dbReference>
<dbReference type="GO" id="GO:0009986">
    <property type="term" value="C:cell surface"/>
    <property type="evidence" value="ECO:0000314"/>
    <property type="project" value="UniProtKB"/>
</dbReference>
<dbReference type="GO" id="GO:0033116">
    <property type="term" value="C:endoplasmic reticulum-Golgi intermediate compartment membrane"/>
    <property type="evidence" value="ECO:0000304"/>
    <property type="project" value="Reactome"/>
</dbReference>
<dbReference type="GO" id="GO:0070062">
    <property type="term" value="C:extracellular exosome"/>
    <property type="evidence" value="ECO:0007005"/>
    <property type="project" value="UniProtKB"/>
</dbReference>
<dbReference type="GO" id="GO:0005576">
    <property type="term" value="C:extracellular region"/>
    <property type="evidence" value="ECO:0000304"/>
    <property type="project" value="Reactome"/>
</dbReference>
<dbReference type="GO" id="GO:0101003">
    <property type="term" value="C:ficolin-1-rich granule membrane"/>
    <property type="evidence" value="ECO:0000304"/>
    <property type="project" value="Reactome"/>
</dbReference>
<dbReference type="GO" id="GO:0000139">
    <property type="term" value="C:Golgi membrane"/>
    <property type="evidence" value="ECO:0000304"/>
    <property type="project" value="Reactome"/>
</dbReference>
<dbReference type="GO" id="GO:0045121">
    <property type="term" value="C:membrane raft"/>
    <property type="evidence" value="ECO:0000314"/>
    <property type="project" value="UniProtKB"/>
</dbReference>
<dbReference type="GO" id="GO:0005886">
    <property type="term" value="C:plasma membrane"/>
    <property type="evidence" value="ECO:0000314"/>
    <property type="project" value="UniProtKB"/>
</dbReference>
<dbReference type="GO" id="GO:0030667">
    <property type="term" value="C:secretory granule membrane"/>
    <property type="evidence" value="ECO:0000304"/>
    <property type="project" value="Reactome"/>
</dbReference>
<dbReference type="GO" id="GO:0098552">
    <property type="term" value="C:side of membrane"/>
    <property type="evidence" value="ECO:0007669"/>
    <property type="project" value="UniProtKB-KW"/>
</dbReference>
<dbReference type="GO" id="GO:0030133">
    <property type="term" value="C:transport vesicle"/>
    <property type="evidence" value="ECO:0000304"/>
    <property type="project" value="Reactome"/>
</dbReference>
<dbReference type="GO" id="GO:0008289">
    <property type="term" value="F:lipid binding"/>
    <property type="evidence" value="ECO:0000314"/>
    <property type="project" value="UniProtKB"/>
</dbReference>
<dbReference type="GO" id="GO:0001618">
    <property type="term" value="F:virus receptor activity"/>
    <property type="evidence" value="ECO:0000314"/>
    <property type="project" value="UniProtKB"/>
</dbReference>
<dbReference type="GO" id="GO:0006958">
    <property type="term" value="P:complement activation, classical pathway"/>
    <property type="evidence" value="ECO:0007669"/>
    <property type="project" value="UniProtKB-KW"/>
</dbReference>
<dbReference type="GO" id="GO:0045087">
    <property type="term" value="P:innate immune response"/>
    <property type="evidence" value="ECO:0007669"/>
    <property type="project" value="UniProtKB-KW"/>
</dbReference>
<dbReference type="GO" id="GO:0045916">
    <property type="term" value="P:negative regulation of complement activation"/>
    <property type="evidence" value="ECO:0000314"/>
    <property type="project" value="UniProtKB"/>
</dbReference>
<dbReference type="GO" id="GO:2000516">
    <property type="term" value="P:positive regulation of CD4-positive, alpha-beta T cell activation"/>
    <property type="evidence" value="ECO:0000314"/>
    <property type="project" value="UniProtKB"/>
</dbReference>
<dbReference type="GO" id="GO:2000563">
    <property type="term" value="P:positive regulation of CD4-positive, alpha-beta T cell proliferation"/>
    <property type="evidence" value="ECO:0000314"/>
    <property type="project" value="UniProtKB"/>
</dbReference>
<dbReference type="GO" id="GO:0007204">
    <property type="term" value="P:positive regulation of cytosolic calcium ion concentration"/>
    <property type="evidence" value="ECO:0000314"/>
    <property type="project" value="UniProtKB"/>
</dbReference>
<dbReference type="GO" id="GO:0002726">
    <property type="term" value="P:positive regulation of T cell cytokine production"/>
    <property type="evidence" value="ECO:0000314"/>
    <property type="project" value="UniProtKB"/>
</dbReference>
<dbReference type="GO" id="GO:0030449">
    <property type="term" value="P:regulation of complement activation"/>
    <property type="evidence" value="ECO:0000314"/>
    <property type="project" value="MGI"/>
</dbReference>
<dbReference type="GO" id="GO:1903659">
    <property type="term" value="P:regulation of complement-dependent cytotoxicity"/>
    <property type="evidence" value="ECO:0000314"/>
    <property type="project" value="MGI"/>
</dbReference>
<dbReference type="GO" id="GO:0031664">
    <property type="term" value="P:regulation of lipopolysaccharide-mediated signaling pathway"/>
    <property type="evidence" value="ECO:0000314"/>
    <property type="project" value="UniProtKB"/>
</dbReference>
<dbReference type="GO" id="GO:0045730">
    <property type="term" value="P:respiratory burst"/>
    <property type="evidence" value="ECO:0000303"/>
    <property type="project" value="UniProtKB"/>
</dbReference>
<dbReference type="CDD" id="cd00033">
    <property type="entry name" value="CCP"/>
    <property type="match status" value="4"/>
</dbReference>
<dbReference type="FunFam" id="2.10.70.10:FF:000078">
    <property type="entry name" value="Complement decay-accelerating factor"/>
    <property type="match status" value="1"/>
</dbReference>
<dbReference type="FunFam" id="2.10.70.10:FF:000079">
    <property type="entry name" value="Complement decay-accelerating factor"/>
    <property type="match status" value="1"/>
</dbReference>
<dbReference type="FunFam" id="2.10.70.10:FF:000055">
    <property type="entry name" value="Complement decay-accelerating factor, GPI-anchored"/>
    <property type="match status" value="1"/>
</dbReference>
<dbReference type="FunFam" id="2.10.70.10:FF:000008">
    <property type="entry name" value="Complement receptor type 1"/>
    <property type="match status" value="1"/>
</dbReference>
<dbReference type="Gene3D" id="2.10.70.10">
    <property type="entry name" value="Complement Module, domain 1"/>
    <property type="match status" value="4"/>
</dbReference>
<dbReference type="InterPro" id="IPR050350">
    <property type="entry name" value="Compl-Cell_Adhes-Reg"/>
</dbReference>
<dbReference type="InterPro" id="IPR035976">
    <property type="entry name" value="Sushi/SCR/CCP_sf"/>
</dbReference>
<dbReference type="InterPro" id="IPR000436">
    <property type="entry name" value="Sushi_SCR_CCP_dom"/>
</dbReference>
<dbReference type="PANTHER" id="PTHR19325">
    <property type="entry name" value="COMPLEMENT COMPONENT-RELATED SUSHI DOMAIN-CONTAINING"/>
    <property type="match status" value="1"/>
</dbReference>
<dbReference type="PANTHER" id="PTHR19325:SF317">
    <property type="entry name" value="COMPLEMENT DECAY-ACCELERATING FACTOR"/>
    <property type="match status" value="1"/>
</dbReference>
<dbReference type="Pfam" id="PF00084">
    <property type="entry name" value="Sushi"/>
    <property type="match status" value="4"/>
</dbReference>
<dbReference type="SMART" id="SM00032">
    <property type="entry name" value="CCP"/>
    <property type="match status" value="4"/>
</dbReference>
<dbReference type="SUPFAM" id="SSF57535">
    <property type="entry name" value="Complement control module/SCR domain"/>
    <property type="match status" value="4"/>
</dbReference>
<dbReference type="PROSITE" id="PS50923">
    <property type="entry name" value="SUSHI"/>
    <property type="match status" value="4"/>
</dbReference>
<comment type="function">
    <text evidence="16 26">This protein recognizes C4b and C3b fragments that condense with cell-surface hydroxyl or amino groups when nascent C4b and C3b are locally generated during C4 and c3 activation. Interaction of daf with cell-associated C4b and C3b polypeptides interferes with their ability to catalyze the conversion of C2 and factor B to enzymatically active C2a and Bb and thereby prevents the formation of C4b2a and C3bBb, the amplification convertases of the complement cascade (PubMed:7525274). Inhibits complement activation by destabilizing and preventing the formation of C3 and C5 convertases, which prevents complement damage (PubMed:28657829).</text>
</comment>
<comment type="function">
    <text evidence="18">(Microbial infection) Acts as a receptor for Coxsackievirus A21, coxsackieviruses B1, B3 and B5.</text>
</comment>
<comment type="function">
    <text evidence="17">(Microbial infection) Acts as a receptor for Human enterovirus 70 and D68 (Probable).</text>
</comment>
<comment type="function">
    <text evidence="16 24">(Microbial infection) Acts as a receptor for Human echoviruses 6, 7, 11, 12, 20 and 21.</text>
</comment>
<comment type="subunit">
    <text evidence="4 6 24">Monomer (major form) and non-disulfide-linked, covalent homodimer (minor form). Interacts with ADGRE5 (PubMed:11297558).</text>
</comment>
<comment type="subunit">
    <text evidence="18">(Microbial infection) Interacts with coxsackievirus A21, coxsackieviruses B1, B3 and B5 capsid proteins.</text>
</comment>
<comment type="subunit">
    <text evidence="17">(Microbial infection) Interacts with human enterovirus 70 and D68 capsid proteins (Probable).</text>
</comment>
<comment type="subunit">
    <text evidence="16">(Microbial infection) Interacts with human echoviruses 6, 7, 11, 12, 20 and 21 capsid proteins.</text>
</comment>
<comment type="interaction">
    <interactant intactId="EBI-1033846">
        <id>P08174</id>
    </interactant>
    <interactant intactId="EBI-1756009">
        <id>P48960</id>
        <label>ADGRE5</label>
    </interactant>
    <organismsDiffer>false</organismsDiffer>
    <experiments>2</experiments>
</comment>
<comment type="subcellular location">
    <molecule>Isoform 1</molecule>
    <subcellularLocation>
        <location>Cell membrane</location>
        <topology>Single-pass type I membrane protein</topology>
    </subcellularLocation>
</comment>
<comment type="subcellular location">
    <molecule>Isoform 2</molecule>
    <subcellularLocation>
        <location>Cell membrane</location>
        <topology>Lipid-anchor</topology>
        <topology>GPI-anchor</topology>
    </subcellularLocation>
</comment>
<comment type="subcellular location">
    <molecule>Isoform 3</molecule>
    <subcellularLocation>
        <location evidence="7">Secreted</location>
    </subcellularLocation>
</comment>
<comment type="subcellular location">
    <molecule>Isoform 4</molecule>
    <subcellularLocation>
        <location evidence="7">Secreted</location>
    </subcellularLocation>
</comment>
<comment type="subcellular location">
    <molecule>Isoform 5</molecule>
    <subcellularLocation>
        <location evidence="7">Secreted</location>
    </subcellularLocation>
</comment>
<comment type="subcellular location">
    <molecule>Isoform 6</molecule>
    <subcellularLocation>
        <location evidence="25">Cell membrane</location>
        <topology evidence="25">Lipid-anchor</topology>
        <topology evidence="25">GPI-anchor</topology>
    </subcellularLocation>
</comment>
<comment type="subcellular location">
    <molecule>Isoform 7</molecule>
    <subcellularLocation>
        <location evidence="25">Cell membrane</location>
        <topology evidence="25">Lipid-anchor</topology>
        <topology evidence="25">GPI-anchor</topology>
    </subcellularLocation>
</comment>
<comment type="alternative products">
    <event type="alternative splicing"/>
    <isoform>
        <id>P08174-1</id>
        <name>2</name>
        <name>DAF-2</name>
        <sequence type="displayed"/>
    </isoform>
    <isoform>
        <id>P08174-2</id>
        <name>1</name>
        <name>DAF-1</name>
        <sequence type="described" ref="VSP_001200"/>
    </isoform>
    <isoform>
        <id>P08174-3</id>
        <name>3</name>
        <name>VDAF3</name>
        <sequence type="described" ref="VSP_047636"/>
    </isoform>
    <isoform>
        <id>P08174-4</id>
        <name>4</name>
        <name>VDAF2</name>
        <sequence type="described" ref="VSP_047637"/>
    </isoform>
    <isoform>
        <id>P08174-5</id>
        <name>5</name>
        <name>VDAF1</name>
        <sequence type="described" ref="VSP_047638"/>
    </isoform>
    <isoform>
        <id>P08174-6</id>
        <name>6</name>
        <name>VDAF4</name>
        <sequence type="described" ref="VSP_047635"/>
    </isoform>
    <isoform>
        <id>P08174-7</id>
        <name>7</name>
        <name>VDAF5</name>
        <sequence type="described" ref="VSP_047634"/>
    </isoform>
</comment>
<comment type="tissue specificity">
    <text>Expressed on the plasma membranes of all cell types that are in intimate contact with plasma complement proteins. It is also found on the surfaces of epithelial cells lining extracellular compartments, and variants of the molecule are present in body fluids and in extracellular matrix.</text>
</comment>
<comment type="domain">
    <text evidence="1">The first Sushi domain (SCR1) is not necessary for function. SCR2 and SCR4 provide the proper conformation for the active site on SCR3 (By similarity).</text>
</comment>
<comment type="PTM">
    <text evidence="10 12">The Ser/Thr-rich domain is heavily O-glycosylated.</text>
</comment>
<comment type="polymorphism">
    <text evidence="5">Responsible for the Cromer blood group system (CROM) [MIM:613793]. It consists of at least 8 high-incidence (Cr(a), Tc(a), Dr(a), Es(a), WES(b), UMC, IFC and GUTI) and three low-incidence (Tc(b), Tc(c) and WES(a)) antigens that reside on DAF. In the Cromer phenotypes Dr(a-) and Inab there is reduced or absent expression of DAF, respectively. In the case of the Dr(a-) phenotype, a single nucleotide substitution within exon 5 accounts for two changes: a simple amino acid substitution, Leu-199 that is the basis of the antigenic variation, and an alternative splicing event that underlies the decreased expression of DAF in this phenotype. The Inab phenotype is a very rare one in which the red blood cells lack all Cromer system antigens. The red blood cells of individuals with Inab phenotype have a deficiency of DAF, but these individuals are not known to have any associated hematologic or other abnormalities (PubMed:12675719).</text>
</comment>
<comment type="disease" evidence="13 14">
    <disease id="DI-05079">
        <name>Complement hyperactivation, angiopathic thrombosis, and protein-losing enteropathy</name>
        <acronym>CHAPLE</acronym>
        <description>An autosomal recessive disease characterized by abdominal pain and diarrhea, primary intestinal lymphangiectasia, edema due to hypoproteinemia, malabsorption, and less frequently, bowel inflammation, recurrent infections, and angiopathic thromboembolic disease. Patients' T lymphocytes show increased complement activation causing surface deposition of complement and the generation of soluble C5a.</description>
        <dbReference type="MIM" id="226300"/>
    </disease>
    <text>The disease is caused by variants affecting the gene represented in this entry. CHAPLE is caused by biallelic mutations in the CD55 gene.</text>
</comment>
<comment type="miscellaneous">
    <molecule>Isoform 6</molecule>
    <text evidence="23">Includes partial sequence of the intron 7.</text>
</comment>
<comment type="miscellaneous">
    <molecule>Isoform 7</molecule>
    <text evidence="23">Includes full sequence of the intron 7.</text>
</comment>
<comment type="similarity">
    <text evidence="23">Belongs to the receptors of complement activation (RCA) family.</text>
</comment>
<comment type="online information" name="CD55base">
    <link uri="https://databases.lovd.nl/shared/genes/CD55"/>
    <text>CD55 mutation db</text>
</comment>
<comment type="online information" name="Wikipedia">
    <link uri="https://en.wikipedia.org/wiki/Decay_accelerating_factor"/>
    <text>Decay-accelerating factor entry</text>
</comment>
<comment type="online information" name="Virus Particle ExploreR db">
    <link uri="https://viperdb.scripps.edu/Info_Page.php?VDB=1z7z"/>
    <text>Icosahedral capsid structure</text>
</comment>
<protein>
    <recommendedName>
        <fullName>Complement decay-accelerating factor</fullName>
    </recommendedName>
    <cdAntigenName>CD55</cdAntigenName>
</protein>
<proteinExistence type="evidence at protein level"/>